<feature type="chain" id="PRO_0000272824" description="Large ribosomal subunit protein uL23">
    <location>
        <begin position="1"/>
        <end position="99"/>
    </location>
</feature>
<reference key="1">
    <citation type="submission" date="2006-03" db="EMBL/GenBank/DDBJ databases">
        <title>Complete sequence of Rhodopseudomonas palustris BisB18.</title>
        <authorList>
            <consortium name="US DOE Joint Genome Institute"/>
            <person name="Copeland A."/>
            <person name="Lucas S."/>
            <person name="Lapidus A."/>
            <person name="Barry K."/>
            <person name="Detter J.C."/>
            <person name="Glavina del Rio T."/>
            <person name="Hammon N."/>
            <person name="Israni S."/>
            <person name="Dalin E."/>
            <person name="Tice H."/>
            <person name="Pitluck S."/>
            <person name="Chain P."/>
            <person name="Malfatti S."/>
            <person name="Shin M."/>
            <person name="Vergez L."/>
            <person name="Schmutz J."/>
            <person name="Larimer F."/>
            <person name="Land M."/>
            <person name="Hauser L."/>
            <person name="Pelletier D.A."/>
            <person name="Kyrpides N."/>
            <person name="Anderson I."/>
            <person name="Oda Y."/>
            <person name="Harwood C.S."/>
            <person name="Richardson P."/>
        </authorList>
    </citation>
    <scope>NUCLEOTIDE SEQUENCE [LARGE SCALE GENOMIC DNA]</scope>
    <source>
        <strain>BisB18</strain>
    </source>
</reference>
<name>RL23_RHOPB</name>
<gene>
    <name evidence="1" type="primary">rplW</name>
    <name type="ordered locus">RPC_3446</name>
</gene>
<comment type="function">
    <text evidence="1">One of the early assembly proteins it binds 23S rRNA. One of the proteins that surrounds the polypeptide exit tunnel on the outside of the ribosome. Forms the main docking site for trigger factor binding to the ribosome.</text>
</comment>
<comment type="subunit">
    <text evidence="1">Part of the 50S ribosomal subunit. Contacts protein L29, and trigger factor when it is bound to the ribosome.</text>
</comment>
<comment type="similarity">
    <text evidence="1">Belongs to the universal ribosomal protein uL23 family.</text>
</comment>
<protein>
    <recommendedName>
        <fullName evidence="1">Large ribosomal subunit protein uL23</fullName>
    </recommendedName>
    <alternativeName>
        <fullName evidence="2">50S ribosomal protein L23</fullName>
    </alternativeName>
</protein>
<organism>
    <name type="scientific">Rhodopseudomonas palustris (strain BisB18)</name>
    <dbReference type="NCBI Taxonomy" id="316056"/>
    <lineage>
        <taxon>Bacteria</taxon>
        <taxon>Pseudomonadati</taxon>
        <taxon>Pseudomonadota</taxon>
        <taxon>Alphaproteobacteria</taxon>
        <taxon>Hyphomicrobiales</taxon>
        <taxon>Nitrobacteraceae</taxon>
        <taxon>Rhodopseudomonas</taxon>
    </lineage>
</organism>
<proteinExistence type="inferred from homology"/>
<accession>Q211F0</accession>
<dbReference type="EMBL" id="CP000301">
    <property type="protein sequence ID" value="ABD88986.1"/>
    <property type="molecule type" value="Genomic_DNA"/>
</dbReference>
<dbReference type="SMR" id="Q211F0"/>
<dbReference type="STRING" id="316056.RPC_3446"/>
<dbReference type="KEGG" id="rpc:RPC_3446"/>
<dbReference type="eggNOG" id="COG0089">
    <property type="taxonomic scope" value="Bacteria"/>
</dbReference>
<dbReference type="HOGENOM" id="CLU_037562_3_1_5"/>
<dbReference type="OrthoDB" id="9793353at2"/>
<dbReference type="GO" id="GO:1990904">
    <property type="term" value="C:ribonucleoprotein complex"/>
    <property type="evidence" value="ECO:0007669"/>
    <property type="project" value="UniProtKB-KW"/>
</dbReference>
<dbReference type="GO" id="GO:0005840">
    <property type="term" value="C:ribosome"/>
    <property type="evidence" value="ECO:0007669"/>
    <property type="project" value="UniProtKB-KW"/>
</dbReference>
<dbReference type="GO" id="GO:0019843">
    <property type="term" value="F:rRNA binding"/>
    <property type="evidence" value="ECO:0007669"/>
    <property type="project" value="UniProtKB-UniRule"/>
</dbReference>
<dbReference type="GO" id="GO:0003735">
    <property type="term" value="F:structural constituent of ribosome"/>
    <property type="evidence" value="ECO:0007669"/>
    <property type="project" value="InterPro"/>
</dbReference>
<dbReference type="GO" id="GO:0006412">
    <property type="term" value="P:translation"/>
    <property type="evidence" value="ECO:0007669"/>
    <property type="project" value="UniProtKB-UniRule"/>
</dbReference>
<dbReference type="FunFam" id="3.30.70.330:FF:000001">
    <property type="entry name" value="50S ribosomal protein L23"/>
    <property type="match status" value="1"/>
</dbReference>
<dbReference type="Gene3D" id="3.30.70.330">
    <property type="match status" value="1"/>
</dbReference>
<dbReference type="HAMAP" id="MF_01369_B">
    <property type="entry name" value="Ribosomal_uL23_B"/>
    <property type="match status" value="1"/>
</dbReference>
<dbReference type="InterPro" id="IPR012677">
    <property type="entry name" value="Nucleotide-bd_a/b_plait_sf"/>
</dbReference>
<dbReference type="InterPro" id="IPR013025">
    <property type="entry name" value="Ribosomal_uL23-like"/>
</dbReference>
<dbReference type="InterPro" id="IPR012678">
    <property type="entry name" value="Ribosomal_uL23/eL15/eS24_sf"/>
</dbReference>
<dbReference type="InterPro" id="IPR001014">
    <property type="entry name" value="Ribosomal_uL23_CS"/>
</dbReference>
<dbReference type="NCBIfam" id="NF004359">
    <property type="entry name" value="PRK05738.1-3"/>
    <property type="match status" value="1"/>
</dbReference>
<dbReference type="NCBIfam" id="NF004360">
    <property type="entry name" value="PRK05738.1-5"/>
    <property type="match status" value="1"/>
</dbReference>
<dbReference type="NCBIfam" id="NF004363">
    <property type="entry name" value="PRK05738.2-4"/>
    <property type="match status" value="1"/>
</dbReference>
<dbReference type="PANTHER" id="PTHR11620">
    <property type="entry name" value="60S RIBOSOMAL PROTEIN L23A"/>
    <property type="match status" value="1"/>
</dbReference>
<dbReference type="Pfam" id="PF00276">
    <property type="entry name" value="Ribosomal_L23"/>
    <property type="match status" value="1"/>
</dbReference>
<dbReference type="SUPFAM" id="SSF54189">
    <property type="entry name" value="Ribosomal proteins S24e, L23 and L15e"/>
    <property type="match status" value="1"/>
</dbReference>
<dbReference type="PROSITE" id="PS00050">
    <property type="entry name" value="RIBOSOMAL_L23"/>
    <property type="match status" value="1"/>
</dbReference>
<evidence type="ECO:0000255" key="1">
    <source>
        <dbReference type="HAMAP-Rule" id="MF_01369"/>
    </source>
</evidence>
<evidence type="ECO:0000305" key="2"/>
<keyword id="KW-0687">Ribonucleoprotein</keyword>
<keyword id="KW-0689">Ribosomal protein</keyword>
<keyword id="KW-0694">RNA-binding</keyword>
<keyword id="KW-0699">rRNA-binding</keyword>
<sequence>MKTIDPRHYDVIVAPVVTEKATIASEHNKVVFKVASKATKPQIKEAVEKLFDVKVKSVNTLVRKGKTKVFRGQFGSQSDVKRAIVTLEEGHRIDVTTGL</sequence>